<evidence type="ECO:0000250" key="1"/>
<evidence type="ECO:0000250" key="2">
    <source>
        <dbReference type="UniProtKB" id="Q8N5Z0"/>
    </source>
</evidence>
<evidence type="ECO:0000250" key="3">
    <source>
        <dbReference type="UniProtKB" id="Q9WVM8"/>
    </source>
</evidence>
<evidence type="ECO:0000255" key="4"/>
<evidence type="ECO:0000256" key="5">
    <source>
        <dbReference type="SAM" id="MobiDB-lite"/>
    </source>
</evidence>
<evidence type="ECO:0000269" key="6">
    <source>
    </source>
</evidence>
<evidence type="ECO:0000305" key="7"/>
<evidence type="ECO:0000305" key="8">
    <source>
    </source>
</evidence>
<evidence type="ECO:0000312" key="9">
    <source>
        <dbReference type="RGD" id="2948"/>
    </source>
</evidence>
<evidence type="ECO:0007744" key="10">
    <source>
    </source>
</evidence>
<name>AADAT_RAT</name>
<proteinExistence type="evidence at protein level"/>
<reference key="1">
    <citation type="journal article" date="1995" name="J. Biol. Chem.">
        <title>Cloning and functional expression of a soluble form of kynurenine/alpha-aminoadipate aminotransferase from rat kidney.</title>
        <authorList>
            <person name="Buchli R."/>
            <person name="Alberati-Giani D."/>
            <person name="Malherbe P."/>
            <person name="Koehler C."/>
            <person name="Broger C."/>
            <person name="Cesura A.M."/>
        </authorList>
    </citation>
    <scope>NUCLEOTIDE SEQUENCE [MRNA]</scope>
    <scope>PARTIAL PROTEIN SEQUENCE</scope>
    <scope>FUNCTION</scope>
    <scope>CATALYTIC ACTIVITY</scope>
    <scope>BIOPHYSICOCHEMICAL PROPERTIES</scope>
    <scope>HOMODIMERIZATION</scope>
    <source>
        <tissue>Kidney</tissue>
    </source>
</reference>
<reference key="2">
    <citation type="journal article" date="2004" name="Genome Res.">
        <title>The status, quality, and expansion of the NIH full-length cDNA project: the Mammalian Gene Collection (MGC).</title>
        <authorList>
            <consortium name="The MGC Project Team"/>
        </authorList>
    </citation>
    <scope>NUCLEOTIDE SEQUENCE [LARGE SCALE MRNA]</scope>
    <source>
        <tissue>Kidney</tissue>
    </source>
</reference>
<reference key="3">
    <citation type="journal article" date="2012" name="Nat. Commun.">
        <title>Quantitative maps of protein phosphorylation sites across 14 different rat organs and tissues.</title>
        <authorList>
            <person name="Lundby A."/>
            <person name="Secher A."/>
            <person name="Lage K."/>
            <person name="Nordsborg N.B."/>
            <person name="Dmytriyev A."/>
            <person name="Lundby C."/>
            <person name="Olsen J.V."/>
        </authorList>
    </citation>
    <scope>PHOSPHORYLATION [LARGE SCALE ANALYSIS] AT SER-40</scope>
    <scope>IDENTIFICATION BY MASS SPECTROMETRY [LARGE SCALE ANALYSIS]</scope>
</reference>
<comment type="function">
    <text evidence="6">Transaminase with broad substrate specificity. Has transaminase activity towards aminoadipate, kynurenine, methionine and glutamate. Shows activity also towards tryptophan, aspartate and hydroxykynurenine. Accepts a variety of oxo-acids as amino-group acceptors, with a preference for 2-oxoglutarate, 2-oxocaproic acid, phenylpyruvate and alpha-oxo-gamma-methiol butyric acid. Can also use glyoxylate as amino-group acceptor (in vitro).</text>
</comment>
<comment type="catalytic activity">
    <reaction evidence="6">
        <text>L-kynurenine + 2-oxoglutarate = kynurenate + L-glutamate + H2O</text>
        <dbReference type="Rhea" id="RHEA:65560"/>
        <dbReference type="ChEBI" id="CHEBI:15377"/>
        <dbReference type="ChEBI" id="CHEBI:16810"/>
        <dbReference type="ChEBI" id="CHEBI:29985"/>
        <dbReference type="ChEBI" id="CHEBI:57959"/>
        <dbReference type="ChEBI" id="CHEBI:58454"/>
        <dbReference type="EC" id="2.6.1.7"/>
    </reaction>
    <physiologicalReaction direction="left-to-right" evidence="8">
        <dbReference type="Rhea" id="RHEA:65561"/>
    </physiologicalReaction>
</comment>
<comment type="catalytic activity">
    <reaction evidence="6">
        <text>L-2-aminoadipate + 2-oxoglutarate = 2-oxoadipate + L-glutamate</text>
        <dbReference type="Rhea" id="RHEA:12601"/>
        <dbReference type="ChEBI" id="CHEBI:16810"/>
        <dbReference type="ChEBI" id="CHEBI:29985"/>
        <dbReference type="ChEBI" id="CHEBI:57499"/>
        <dbReference type="ChEBI" id="CHEBI:58672"/>
        <dbReference type="EC" id="2.6.1.39"/>
    </reaction>
    <physiologicalReaction direction="left-to-right" evidence="8">
        <dbReference type="Rhea" id="RHEA:12602"/>
    </physiologicalReaction>
</comment>
<comment type="catalytic activity">
    <reaction evidence="2">
        <text>glycine + 2-oxoglutarate = glyoxylate + L-glutamate</text>
        <dbReference type="Rhea" id="RHEA:14089"/>
        <dbReference type="ChEBI" id="CHEBI:16810"/>
        <dbReference type="ChEBI" id="CHEBI:29985"/>
        <dbReference type="ChEBI" id="CHEBI:36655"/>
        <dbReference type="ChEBI" id="CHEBI:57305"/>
        <dbReference type="EC" id="2.6.1.4"/>
    </reaction>
</comment>
<comment type="catalytic activity">
    <reaction evidence="2">
        <text>L-kynurenine + glyoxylate = kynurenate + glycine + H2O</text>
        <dbReference type="Rhea" id="RHEA:65896"/>
        <dbReference type="ChEBI" id="CHEBI:15377"/>
        <dbReference type="ChEBI" id="CHEBI:36655"/>
        <dbReference type="ChEBI" id="CHEBI:57305"/>
        <dbReference type="ChEBI" id="CHEBI:57959"/>
        <dbReference type="ChEBI" id="CHEBI:58454"/>
        <dbReference type="EC" id="2.6.1.63"/>
    </reaction>
    <physiologicalReaction direction="left-to-right" evidence="2">
        <dbReference type="Rhea" id="RHEA:65897"/>
    </physiologicalReaction>
</comment>
<comment type="catalytic activity">
    <reaction evidence="6">
        <text>3-hydroxy-L-kynurenine + glyoxylate = xanthurenate + glycine + H2O</text>
        <dbReference type="Rhea" id="RHEA:65900"/>
        <dbReference type="ChEBI" id="CHEBI:15377"/>
        <dbReference type="ChEBI" id="CHEBI:36655"/>
        <dbReference type="ChEBI" id="CHEBI:57305"/>
        <dbReference type="ChEBI" id="CHEBI:58125"/>
        <dbReference type="ChEBI" id="CHEBI:71201"/>
        <dbReference type="EC" id="2.6.1.63"/>
    </reaction>
    <physiologicalReaction direction="left-to-right" evidence="8">
        <dbReference type="Rhea" id="RHEA:65901"/>
    </physiologicalReaction>
</comment>
<comment type="catalytic activity">
    <reaction evidence="2">
        <text>2-oxohexanoate + L-kynurenine = L-2-aminohexanoate + kynurenate + H2O</text>
        <dbReference type="Rhea" id="RHEA:66060"/>
        <dbReference type="ChEBI" id="CHEBI:15377"/>
        <dbReference type="ChEBI" id="CHEBI:35177"/>
        <dbReference type="ChEBI" id="CHEBI:57959"/>
        <dbReference type="ChEBI" id="CHEBI:58454"/>
        <dbReference type="ChEBI" id="CHEBI:58455"/>
    </reaction>
    <physiologicalReaction direction="left-to-right" evidence="2">
        <dbReference type="Rhea" id="RHEA:66061"/>
    </physiologicalReaction>
</comment>
<comment type="catalytic activity">
    <reaction evidence="6">
        <text>3-phenylpyruvate + L-kynurenine = kynurenate + L-phenylalanine + H2O</text>
        <dbReference type="Rhea" id="RHEA:66092"/>
        <dbReference type="ChEBI" id="CHEBI:15377"/>
        <dbReference type="ChEBI" id="CHEBI:18005"/>
        <dbReference type="ChEBI" id="CHEBI:57959"/>
        <dbReference type="ChEBI" id="CHEBI:58095"/>
        <dbReference type="ChEBI" id="CHEBI:58454"/>
    </reaction>
    <physiologicalReaction direction="left-to-right" evidence="8">
        <dbReference type="Rhea" id="RHEA:66093"/>
    </physiologicalReaction>
</comment>
<comment type="catalytic activity">
    <reaction evidence="2">
        <text>4-methylsulfanyl-2-oxobutanoate + L-kynurenine = kynurenate + L-methionine + H2O</text>
        <dbReference type="Rhea" id="RHEA:69096"/>
        <dbReference type="ChEBI" id="CHEBI:15377"/>
        <dbReference type="ChEBI" id="CHEBI:16723"/>
        <dbReference type="ChEBI" id="CHEBI:57844"/>
        <dbReference type="ChEBI" id="CHEBI:57959"/>
        <dbReference type="ChEBI" id="CHEBI:58454"/>
    </reaction>
    <physiologicalReaction direction="left-to-right" evidence="2">
        <dbReference type="Rhea" id="RHEA:69097"/>
    </physiologicalReaction>
</comment>
<comment type="catalytic activity">
    <reaction evidence="2">
        <text>2-oxo-3-sulfanylpropanoate + L-kynurenine = kynurenate + L-cysteine + H2O</text>
        <dbReference type="Rhea" id="RHEA:69104"/>
        <dbReference type="ChEBI" id="CHEBI:15377"/>
        <dbReference type="ChEBI" id="CHEBI:35235"/>
        <dbReference type="ChEBI" id="CHEBI:57678"/>
        <dbReference type="ChEBI" id="CHEBI:57959"/>
        <dbReference type="ChEBI" id="CHEBI:58454"/>
    </reaction>
    <physiologicalReaction direction="left-to-right" evidence="2">
        <dbReference type="Rhea" id="RHEA:69105"/>
    </physiologicalReaction>
</comment>
<comment type="catalytic activity">
    <reaction evidence="2">
        <text>indole-3-pyruvate + L-kynurenine = kynurenate + L-tryptophan + H2O</text>
        <dbReference type="Rhea" id="RHEA:66052"/>
        <dbReference type="ChEBI" id="CHEBI:15377"/>
        <dbReference type="ChEBI" id="CHEBI:17640"/>
        <dbReference type="ChEBI" id="CHEBI:57912"/>
        <dbReference type="ChEBI" id="CHEBI:57959"/>
        <dbReference type="ChEBI" id="CHEBI:58454"/>
    </reaction>
    <physiologicalReaction direction="left-to-right" evidence="2">
        <dbReference type="Rhea" id="RHEA:66053"/>
    </physiologicalReaction>
</comment>
<comment type="catalytic activity">
    <reaction evidence="2">
        <text>2-oxopentanoate + L-kynurenine = L-2-aminopentanoate + kynurenate + H2O</text>
        <dbReference type="Rhea" id="RHEA:66076"/>
        <dbReference type="ChEBI" id="CHEBI:15377"/>
        <dbReference type="ChEBI" id="CHEBI:28644"/>
        <dbReference type="ChEBI" id="CHEBI:57959"/>
        <dbReference type="ChEBI" id="CHEBI:58441"/>
        <dbReference type="ChEBI" id="CHEBI:58454"/>
    </reaction>
    <physiologicalReaction direction="left-to-right" evidence="2">
        <dbReference type="Rhea" id="RHEA:66077"/>
    </physiologicalReaction>
</comment>
<comment type="catalytic activity">
    <reaction evidence="2">
        <text>4-methyl-2-oxopentanoate + L-kynurenine = kynurenate + L-leucine + H2O</text>
        <dbReference type="Rhea" id="RHEA:66068"/>
        <dbReference type="ChEBI" id="CHEBI:15377"/>
        <dbReference type="ChEBI" id="CHEBI:17865"/>
        <dbReference type="ChEBI" id="CHEBI:57427"/>
        <dbReference type="ChEBI" id="CHEBI:57959"/>
        <dbReference type="ChEBI" id="CHEBI:58454"/>
    </reaction>
    <physiologicalReaction direction="left-to-right" evidence="2">
        <dbReference type="Rhea" id="RHEA:66069"/>
    </physiologicalReaction>
</comment>
<comment type="catalytic activity">
    <reaction evidence="2">
        <text>glyoxylate + L-methionine = 4-methylsulfanyl-2-oxobutanoate + glycine</text>
        <dbReference type="Rhea" id="RHEA:22884"/>
        <dbReference type="ChEBI" id="CHEBI:16723"/>
        <dbReference type="ChEBI" id="CHEBI:36655"/>
        <dbReference type="ChEBI" id="CHEBI:57305"/>
        <dbReference type="ChEBI" id="CHEBI:57844"/>
        <dbReference type="EC" id="2.6.1.73"/>
    </reaction>
</comment>
<comment type="catalytic activity">
    <reaction evidence="2">
        <text>L-2-aminoadipate + glyoxylate = 2-oxoadipate + glycine</text>
        <dbReference type="Rhea" id="RHEA:69112"/>
        <dbReference type="ChEBI" id="CHEBI:36655"/>
        <dbReference type="ChEBI" id="CHEBI:57305"/>
        <dbReference type="ChEBI" id="CHEBI:57499"/>
        <dbReference type="ChEBI" id="CHEBI:58672"/>
    </reaction>
    <physiologicalReaction direction="left-to-right" evidence="2">
        <dbReference type="Rhea" id="RHEA:69113"/>
    </physiologicalReaction>
</comment>
<comment type="catalytic activity">
    <reaction evidence="2">
        <text>L-tyrosine + glyoxylate = 3-(4-hydroxyphenyl)pyruvate + glycine</text>
        <dbReference type="Rhea" id="RHEA:69116"/>
        <dbReference type="ChEBI" id="CHEBI:36242"/>
        <dbReference type="ChEBI" id="CHEBI:36655"/>
        <dbReference type="ChEBI" id="CHEBI:57305"/>
        <dbReference type="ChEBI" id="CHEBI:58315"/>
    </reaction>
</comment>
<comment type="catalytic activity">
    <reaction evidence="2">
        <text>glyoxylate + L-phenylalanine = 3-phenylpyruvate + glycine</text>
        <dbReference type="Rhea" id="RHEA:69120"/>
        <dbReference type="ChEBI" id="CHEBI:18005"/>
        <dbReference type="ChEBI" id="CHEBI:36655"/>
        <dbReference type="ChEBI" id="CHEBI:57305"/>
        <dbReference type="ChEBI" id="CHEBI:58095"/>
    </reaction>
</comment>
<comment type="catalytic activity">
    <reaction evidence="2">
        <text>L-tryptophan + glyoxylate = indole-3-pyruvate + glycine</text>
        <dbReference type="Rhea" id="RHEA:69124"/>
        <dbReference type="ChEBI" id="CHEBI:17640"/>
        <dbReference type="ChEBI" id="CHEBI:36655"/>
        <dbReference type="ChEBI" id="CHEBI:57305"/>
        <dbReference type="ChEBI" id="CHEBI:57912"/>
    </reaction>
</comment>
<comment type="catalytic activity">
    <reaction evidence="2">
        <text>L-leucine + glyoxylate = 4-methyl-2-oxopentanoate + glycine</text>
        <dbReference type="Rhea" id="RHEA:69128"/>
        <dbReference type="ChEBI" id="CHEBI:17865"/>
        <dbReference type="ChEBI" id="CHEBI:36655"/>
        <dbReference type="ChEBI" id="CHEBI:57305"/>
        <dbReference type="ChEBI" id="CHEBI:57427"/>
    </reaction>
</comment>
<comment type="catalytic activity">
    <reaction evidence="6">
        <text>2-oxobutanoate + L-kynurenine = (2S)-2-aminobutanoate + kynurenate + H2O</text>
        <dbReference type="Rhea" id="RHEA:66044"/>
        <dbReference type="ChEBI" id="CHEBI:15377"/>
        <dbReference type="ChEBI" id="CHEBI:16763"/>
        <dbReference type="ChEBI" id="CHEBI:57959"/>
        <dbReference type="ChEBI" id="CHEBI:58454"/>
        <dbReference type="ChEBI" id="CHEBI:74359"/>
    </reaction>
    <physiologicalReaction direction="left-to-right" evidence="8">
        <dbReference type="Rhea" id="RHEA:66045"/>
    </physiologicalReaction>
</comment>
<comment type="catalytic activity">
    <reaction evidence="6">
        <text>2-oxoadipate + L-kynurenine = L-2-aminoadipate + kynurenate + H2O</text>
        <dbReference type="Rhea" id="RHEA:70047"/>
        <dbReference type="ChEBI" id="CHEBI:15377"/>
        <dbReference type="ChEBI" id="CHEBI:57499"/>
        <dbReference type="ChEBI" id="CHEBI:57959"/>
        <dbReference type="ChEBI" id="CHEBI:58454"/>
        <dbReference type="ChEBI" id="CHEBI:58672"/>
    </reaction>
    <physiologicalReaction direction="left-to-right" evidence="8">
        <dbReference type="Rhea" id="RHEA:70048"/>
    </physiologicalReaction>
</comment>
<comment type="catalytic activity">
    <reaction evidence="6">
        <text>2-oxoadipate + L-kynurenine = 4-(2-aminophenyl)-2,4-dioxobutanoate + L-2-aminoadipate</text>
        <dbReference type="Rhea" id="RHEA:70051"/>
        <dbReference type="ChEBI" id="CHEBI:57499"/>
        <dbReference type="ChEBI" id="CHEBI:57959"/>
        <dbReference type="ChEBI" id="CHEBI:58147"/>
        <dbReference type="ChEBI" id="CHEBI:58672"/>
    </reaction>
    <physiologicalReaction direction="left-to-right" evidence="8">
        <dbReference type="Rhea" id="RHEA:70052"/>
    </physiologicalReaction>
</comment>
<comment type="cofactor">
    <cofactor>
        <name>pyridoxal 5'-phosphate</name>
        <dbReference type="ChEBI" id="CHEBI:597326"/>
    </cofactor>
</comment>
<comment type="biophysicochemical properties">
    <kinetics>
        <KM evidence="6">0.33 mM for L-kynurenine</KM>
        <KM evidence="6">1.36 mM for 3-hydroxy-L-kynurenine</KM>
        <KM evidence="6">45.5 uM for 2-oxoglutarate</KM>
        <KM evidence="6">5.6 mM for L-glutamate</KM>
        <Vmax evidence="6">135.0 nmol/min/mg enzyme toward L-kynurenine</Vmax>
        <Vmax evidence="6">166.0 nmol/min/mg enzyme toward 3-hydroxy-L-kynurenine</Vmax>
        <Vmax evidence="6">910.0 nmol/min/mg enzyme toward 3-hydroxy-L-kynurenine</Vmax>
    </kinetics>
</comment>
<comment type="pathway">
    <text>Amino-acid degradation; L-lysine degradation via saccharopine pathway; glutaryl-CoA from L-lysine: step 4/6.</text>
</comment>
<comment type="subunit">
    <text>Homodimer.</text>
</comment>
<comment type="subcellular location">
    <subcellularLocation>
        <location evidence="7">Mitochondrion</location>
    </subcellularLocation>
</comment>
<comment type="PTM">
    <text>The N-terminus is blocked.</text>
</comment>
<comment type="similarity">
    <text evidence="7">Belongs to the class-I pyridoxal-phosphate-dependent aminotransferase family.</text>
</comment>
<feature type="transit peptide" description="Mitochondrion" evidence="4">
    <location>
        <begin position="1"/>
        <end position="29"/>
    </location>
</feature>
<feature type="chain" id="PRO_0000020604" description="Kynurenine/alpha-aminoadipate aminotransferase, mitochondrial">
    <location>
        <begin position="30"/>
        <end position="425"/>
    </location>
</feature>
<feature type="region of interest" description="Disordered" evidence="5">
    <location>
        <begin position="179"/>
        <end position="208"/>
    </location>
</feature>
<feature type="compositionally biased region" description="Basic and acidic residues" evidence="5">
    <location>
        <begin position="179"/>
        <end position="188"/>
    </location>
</feature>
<feature type="compositionally biased region" description="Polar residues" evidence="5">
    <location>
        <begin position="198"/>
        <end position="208"/>
    </location>
</feature>
<feature type="binding site" evidence="1">
    <location>
        <position position="20"/>
    </location>
    <ligand>
        <name>substrate</name>
    </ligand>
</feature>
<feature type="binding site" evidence="1">
    <location>
        <position position="74"/>
    </location>
    <ligand>
        <name>substrate</name>
    </ligand>
</feature>
<feature type="binding site" evidence="1">
    <location>
        <position position="142"/>
    </location>
    <ligand>
        <name>substrate</name>
    </ligand>
</feature>
<feature type="binding site" evidence="1">
    <location>
        <position position="202"/>
    </location>
    <ligand>
        <name>substrate</name>
    </ligand>
</feature>
<feature type="binding site" evidence="1">
    <location>
        <position position="399"/>
    </location>
    <ligand>
        <name>substrate</name>
    </ligand>
</feature>
<feature type="modified residue" description="Phosphoserine" evidence="10">
    <location>
        <position position="40"/>
    </location>
</feature>
<feature type="modified residue" description="N6-succinyllysine" evidence="3">
    <location>
        <position position="172"/>
    </location>
</feature>
<feature type="modified residue" description="N6-acetyllysine" evidence="3">
    <location>
        <position position="179"/>
    </location>
</feature>
<feature type="modified residue" description="N6-(pyridoxal phosphate)lysine; alternate" evidence="1">
    <location>
        <position position="263"/>
    </location>
</feature>
<feature type="modified residue" description="N6-acetyllysine; alternate" evidence="3">
    <location>
        <position position="263"/>
    </location>
</feature>
<feature type="modified residue" description="N6-succinyllysine; alternate" evidence="3">
    <location>
        <position position="263"/>
    </location>
</feature>
<feature type="modified residue" description="N6-acetyllysine; alternate" evidence="3">
    <location>
        <position position="339"/>
    </location>
</feature>
<feature type="modified residue" description="N6-succinyllysine; alternate" evidence="3">
    <location>
        <position position="339"/>
    </location>
</feature>
<feature type="modified residue" description="N6-acetyllysine" evidence="3">
    <location>
        <position position="351"/>
    </location>
</feature>
<feature type="modified residue" description="N6-acetyllysine; alternate" evidence="3">
    <location>
        <position position="367"/>
    </location>
</feature>
<feature type="modified residue" description="N6-succinyllysine; alternate" evidence="3">
    <location>
        <position position="367"/>
    </location>
</feature>
<feature type="modified residue" description="N6-acetyllysine" evidence="3">
    <location>
        <position position="422"/>
    </location>
</feature>
<keyword id="KW-0007">Acetylation</keyword>
<keyword id="KW-0032">Aminotransferase</keyword>
<keyword id="KW-0903">Direct protein sequencing</keyword>
<keyword id="KW-0496">Mitochondrion</keyword>
<keyword id="KW-0597">Phosphoprotein</keyword>
<keyword id="KW-0663">Pyridoxal phosphate</keyword>
<keyword id="KW-1185">Reference proteome</keyword>
<keyword id="KW-0808">Transferase</keyword>
<keyword id="KW-0809">Transit peptide</keyword>
<organism>
    <name type="scientific">Rattus norvegicus</name>
    <name type="common">Rat</name>
    <dbReference type="NCBI Taxonomy" id="10116"/>
    <lineage>
        <taxon>Eukaryota</taxon>
        <taxon>Metazoa</taxon>
        <taxon>Chordata</taxon>
        <taxon>Craniata</taxon>
        <taxon>Vertebrata</taxon>
        <taxon>Euteleostomi</taxon>
        <taxon>Mammalia</taxon>
        <taxon>Eutheria</taxon>
        <taxon>Euarchontoglires</taxon>
        <taxon>Glires</taxon>
        <taxon>Rodentia</taxon>
        <taxon>Myomorpha</taxon>
        <taxon>Muroidea</taxon>
        <taxon>Muridae</taxon>
        <taxon>Murinae</taxon>
        <taxon>Rattus</taxon>
    </lineage>
</organism>
<sequence>MNYSRFLTATSLARKTSPIRATVEIMSRAPKDIISLAPGSPNPKVFPFKSAVFTVENGSTIRFEGEMFQRALQYSSSYGIPELLSWLKQLQIKLHNPPTVNYSPNEGQMDLCITSGCQDGLCKVFEMLINPGDTVLVNEPLYSGALFAMKPLGCNFISVPSDDCGIIPEGLKKVLSQWKPEDSKDPTKRTPKFLYTIPNGNNPTGNSLTGDRKKEIYELARKYDFLIIEDDPYYFLQFTKPWEPTFLSMDVDGRVIRADSLSKVISSGLRVGFITGPKSLIQRIVLHTQISSLHPCTLSQLMISELLYQWGEEGFLAHVDRAIDFYKNQRDFILAAADKWLRGLAEWHVPKAGMFLWIKVNGISDAKKLIEEKAIEREILLVPGNSFFVDNSAPSSFFRASFSQVTPAQMDLVFQRLAQLIKDVS</sequence>
<accession>Q64602</accession>
<protein>
    <recommendedName>
        <fullName evidence="7">Kynurenine/alpha-aminoadipate aminotransferase, mitochondrial</fullName>
        <shortName>KAT/AadAT</shortName>
    </recommendedName>
    <alternativeName>
        <fullName>2-aminoadipate aminotransferase</fullName>
    </alternativeName>
    <alternativeName>
        <fullName>2-aminoadipate transaminase</fullName>
        <ecNumber evidence="6">2.6.1.39</ecNumber>
    </alternativeName>
    <alternativeName>
        <fullName>Alpha-aminoadipate aminotransferase</fullName>
        <shortName>AadAT</shortName>
    </alternativeName>
    <alternativeName>
        <fullName evidence="2">Glycine transaminase AADAT</fullName>
        <ecNumber evidence="2">2.6.1.4</ecNumber>
    </alternativeName>
    <alternativeName>
        <fullName>Kynurenine aminotransferase II</fullName>
    </alternativeName>
    <alternativeName>
        <fullName evidence="2">Kynurenine--glyoxylate transaminase AADAT</fullName>
        <ecNumber evidence="6">2.6.1.63</ecNumber>
    </alternativeName>
    <alternativeName>
        <fullName>Kynurenine--oxoglutarate aminotransferase II</fullName>
    </alternativeName>
    <alternativeName>
        <fullName>Kynurenine--oxoglutarate transaminase 2</fullName>
        <ecNumber evidence="6">2.6.1.7</ecNumber>
    </alternativeName>
    <alternativeName>
        <fullName>Kynurenine--oxoglutarate transaminase II</fullName>
    </alternativeName>
    <alternativeName>
        <fullName evidence="2">Methionine--glyoxylate transaminase AADAT</fullName>
        <ecNumber evidence="2">2.6.1.73</ecNumber>
    </alternativeName>
</protein>
<dbReference type="EC" id="2.6.1.39" evidence="6"/>
<dbReference type="EC" id="2.6.1.4" evidence="2"/>
<dbReference type="EC" id="2.6.1.63" evidence="6"/>
<dbReference type="EC" id="2.6.1.7" evidence="6"/>
<dbReference type="EC" id="2.6.1.73" evidence="2"/>
<dbReference type="EMBL" id="Z50144">
    <property type="protein sequence ID" value="CAA90507.1"/>
    <property type="molecule type" value="mRNA"/>
</dbReference>
<dbReference type="EMBL" id="BC078864">
    <property type="protein sequence ID" value="AAH78864.1"/>
    <property type="molecule type" value="mRNA"/>
</dbReference>
<dbReference type="RefSeq" id="NP_058889.1">
    <property type="nucleotide sequence ID" value="NM_017193.1"/>
</dbReference>
<dbReference type="SMR" id="Q64602"/>
<dbReference type="FunCoup" id="Q64602">
    <property type="interactions" value="167"/>
</dbReference>
<dbReference type="STRING" id="10116.ENSRNOP00000015974"/>
<dbReference type="BindingDB" id="Q64602"/>
<dbReference type="ChEMBL" id="CHEMBL2662"/>
<dbReference type="iPTMnet" id="Q64602"/>
<dbReference type="PhosphoSitePlus" id="Q64602"/>
<dbReference type="PaxDb" id="10116-ENSRNOP00000015974"/>
<dbReference type="GeneID" id="29416"/>
<dbReference type="KEGG" id="rno:29416"/>
<dbReference type="UCSC" id="RGD:2948">
    <property type="organism name" value="rat"/>
</dbReference>
<dbReference type="AGR" id="RGD:2948"/>
<dbReference type="CTD" id="51166"/>
<dbReference type="RGD" id="2948">
    <property type="gene designation" value="Aadat"/>
</dbReference>
<dbReference type="VEuPathDB" id="HostDB:ENSRNOG00000011861"/>
<dbReference type="eggNOG" id="KOG0634">
    <property type="taxonomic scope" value="Eukaryota"/>
</dbReference>
<dbReference type="InParanoid" id="Q64602"/>
<dbReference type="OrthoDB" id="8755at9989"/>
<dbReference type="PhylomeDB" id="Q64602"/>
<dbReference type="TreeFam" id="TF328598"/>
<dbReference type="BioCyc" id="MetaCyc:MONOMER-12251"/>
<dbReference type="BRENDA" id="2.6.1.39">
    <property type="organism ID" value="5301"/>
</dbReference>
<dbReference type="BRENDA" id="2.6.1.7">
    <property type="organism ID" value="5301"/>
</dbReference>
<dbReference type="Reactome" id="R-RNO-71064">
    <property type="pathway name" value="Lysine catabolism"/>
</dbReference>
<dbReference type="Reactome" id="R-RNO-71240">
    <property type="pathway name" value="Tryptophan catabolism"/>
</dbReference>
<dbReference type="SABIO-RK" id="Q64602"/>
<dbReference type="UniPathway" id="UPA00868">
    <property type="reaction ID" value="UER00838"/>
</dbReference>
<dbReference type="PRO" id="PR:Q64602"/>
<dbReference type="Proteomes" id="UP000002494">
    <property type="component" value="Chromosome 16"/>
</dbReference>
<dbReference type="Bgee" id="ENSRNOG00000011861">
    <property type="expression patterns" value="Expressed in kidney and 16 other cell types or tissues"/>
</dbReference>
<dbReference type="ExpressionAtlas" id="Q64602">
    <property type="expression patterns" value="baseline and differential"/>
</dbReference>
<dbReference type="GO" id="GO:0005829">
    <property type="term" value="C:cytosol"/>
    <property type="evidence" value="ECO:0000314"/>
    <property type="project" value="FlyBase"/>
</dbReference>
<dbReference type="GO" id="GO:0005759">
    <property type="term" value="C:mitochondrial matrix"/>
    <property type="evidence" value="ECO:0000314"/>
    <property type="project" value="FlyBase"/>
</dbReference>
<dbReference type="GO" id="GO:0047536">
    <property type="term" value="F:2-aminoadipate transaminase activity"/>
    <property type="evidence" value="ECO:0000314"/>
    <property type="project" value="UniProtKB"/>
</dbReference>
<dbReference type="GO" id="GO:0047958">
    <property type="term" value="F:glycine:2-oxoglutarate aminotransferase activity"/>
    <property type="evidence" value="ECO:0000250"/>
    <property type="project" value="UniProtKB"/>
</dbReference>
<dbReference type="GO" id="GO:0047315">
    <property type="term" value="F:kynurenine-glyoxylate transaminase activity"/>
    <property type="evidence" value="ECO:0000314"/>
    <property type="project" value="UniProtKB"/>
</dbReference>
<dbReference type="GO" id="GO:0016212">
    <property type="term" value="F:kynurenine-oxoglutarate transaminase activity"/>
    <property type="evidence" value="ECO:0000314"/>
    <property type="project" value="UniProtKB"/>
</dbReference>
<dbReference type="GO" id="GO:0050094">
    <property type="term" value="F:methionine-glyoxylate transaminase activity"/>
    <property type="evidence" value="ECO:0000250"/>
    <property type="project" value="UniProtKB"/>
</dbReference>
<dbReference type="GO" id="GO:0042803">
    <property type="term" value="F:protein homodimerization activity"/>
    <property type="evidence" value="ECO:0000266"/>
    <property type="project" value="RGD"/>
</dbReference>
<dbReference type="GO" id="GO:0030170">
    <property type="term" value="F:pyridoxal phosphate binding"/>
    <property type="evidence" value="ECO:0007669"/>
    <property type="project" value="InterPro"/>
</dbReference>
<dbReference type="GO" id="GO:0008483">
    <property type="term" value="F:transaminase activity"/>
    <property type="evidence" value="ECO:0000304"/>
    <property type="project" value="RGD"/>
</dbReference>
<dbReference type="GO" id="GO:0006103">
    <property type="term" value="P:2-oxoglutarate metabolic process"/>
    <property type="evidence" value="ECO:0000250"/>
    <property type="project" value="UniProtKB"/>
</dbReference>
<dbReference type="GO" id="GO:1901605">
    <property type="term" value="P:alpha-amino acid metabolic process"/>
    <property type="evidence" value="ECO:0000318"/>
    <property type="project" value="GO_Central"/>
</dbReference>
<dbReference type="GO" id="GO:0009058">
    <property type="term" value="P:biosynthetic process"/>
    <property type="evidence" value="ECO:0007669"/>
    <property type="project" value="InterPro"/>
</dbReference>
<dbReference type="GO" id="GO:0006536">
    <property type="term" value="P:glutamate metabolic process"/>
    <property type="evidence" value="ECO:0000250"/>
    <property type="project" value="UniProtKB"/>
</dbReference>
<dbReference type="GO" id="GO:0070189">
    <property type="term" value="P:kynurenine metabolic process"/>
    <property type="evidence" value="ECO:0000250"/>
    <property type="project" value="UniProtKB"/>
</dbReference>
<dbReference type="GO" id="GO:0033512">
    <property type="term" value="P:L-lysine catabolic process to acetyl-CoA via saccharopine"/>
    <property type="evidence" value="ECO:0007669"/>
    <property type="project" value="UniProtKB-UniPathway"/>
</dbReference>
<dbReference type="CDD" id="cd00609">
    <property type="entry name" value="AAT_like"/>
    <property type="match status" value="1"/>
</dbReference>
<dbReference type="FunFam" id="3.40.640.10:FF:000071">
    <property type="entry name" value="Kynurenine/alpha-aminoadipate aminotransferase, mitochondrial"/>
    <property type="match status" value="1"/>
</dbReference>
<dbReference type="FunFam" id="3.90.1150.10:FF:000166">
    <property type="entry name" value="Kynurenine/alpha-aminoadipate aminotransferase, mitochondrial"/>
    <property type="match status" value="1"/>
</dbReference>
<dbReference type="Gene3D" id="3.40.640.10">
    <property type="entry name" value="Type I PLP-dependent aspartate aminotransferase-like (Major domain)"/>
    <property type="match status" value="1"/>
</dbReference>
<dbReference type="InterPro" id="IPR004839">
    <property type="entry name" value="Aminotransferase_I/II_large"/>
</dbReference>
<dbReference type="InterPro" id="IPR050859">
    <property type="entry name" value="Class-I_PLP-dep_aminotransf"/>
</dbReference>
<dbReference type="InterPro" id="IPR015424">
    <property type="entry name" value="PyrdxlP-dep_Trfase"/>
</dbReference>
<dbReference type="InterPro" id="IPR015421">
    <property type="entry name" value="PyrdxlP-dep_Trfase_major"/>
</dbReference>
<dbReference type="PANTHER" id="PTHR42790">
    <property type="entry name" value="AMINOTRANSFERASE"/>
    <property type="match status" value="1"/>
</dbReference>
<dbReference type="PANTHER" id="PTHR42790:SF19">
    <property type="entry name" value="KYNURENINE_ALPHA-AMINOADIPATE AMINOTRANSFERASE, MITOCHONDRIAL"/>
    <property type="match status" value="1"/>
</dbReference>
<dbReference type="Pfam" id="PF00155">
    <property type="entry name" value="Aminotran_1_2"/>
    <property type="match status" value="1"/>
</dbReference>
<dbReference type="SUPFAM" id="SSF53383">
    <property type="entry name" value="PLP-dependent transferases"/>
    <property type="match status" value="1"/>
</dbReference>
<gene>
    <name evidence="9" type="primary">Aadat</name>
    <name type="synonym">Kat2</name>
</gene>